<organism>
    <name type="scientific">Campylobacter hominis (strain ATCC BAA-381 / DSM 21671 / CCUG 45161 / LMG 19568 / NCTC 13146 / CH001A)</name>
    <dbReference type="NCBI Taxonomy" id="360107"/>
    <lineage>
        <taxon>Bacteria</taxon>
        <taxon>Pseudomonadati</taxon>
        <taxon>Campylobacterota</taxon>
        <taxon>Epsilonproteobacteria</taxon>
        <taxon>Campylobacterales</taxon>
        <taxon>Campylobacteraceae</taxon>
        <taxon>Campylobacter</taxon>
    </lineage>
</organism>
<feature type="chain" id="PRO_1000086953" description="NADH-quinone oxidoreductase subunit I">
    <location>
        <begin position="1"/>
        <end position="200"/>
    </location>
</feature>
<feature type="domain" description="4Fe-4S ferredoxin-type 1" evidence="1">
    <location>
        <begin position="73"/>
        <end position="102"/>
    </location>
</feature>
<feature type="domain" description="4Fe-4S ferredoxin-type 2" evidence="1">
    <location>
        <begin position="112"/>
        <end position="141"/>
    </location>
</feature>
<feature type="binding site" evidence="1">
    <location>
        <position position="82"/>
    </location>
    <ligand>
        <name>[4Fe-4S] cluster</name>
        <dbReference type="ChEBI" id="CHEBI:49883"/>
        <label>1</label>
    </ligand>
</feature>
<feature type="binding site" evidence="1">
    <location>
        <position position="85"/>
    </location>
    <ligand>
        <name>[4Fe-4S] cluster</name>
        <dbReference type="ChEBI" id="CHEBI:49883"/>
        <label>1</label>
    </ligand>
</feature>
<feature type="binding site" evidence="1">
    <location>
        <position position="88"/>
    </location>
    <ligand>
        <name>[4Fe-4S] cluster</name>
        <dbReference type="ChEBI" id="CHEBI:49883"/>
        <label>1</label>
    </ligand>
</feature>
<feature type="binding site" evidence="1">
    <location>
        <position position="92"/>
    </location>
    <ligand>
        <name>[4Fe-4S] cluster</name>
        <dbReference type="ChEBI" id="CHEBI:49883"/>
        <label>2</label>
    </ligand>
</feature>
<feature type="binding site" evidence="1">
    <location>
        <position position="121"/>
    </location>
    <ligand>
        <name>[4Fe-4S] cluster</name>
        <dbReference type="ChEBI" id="CHEBI:49883"/>
        <label>2</label>
    </ligand>
</feature>
<feature type="binding site" evidence="1">
    <location>
        <position position="124"/>
    </location>
    <ligand>
        <name>[4Fe-4S] cluster</name>
        <dbReference type="ChEBI" id="CHEBI:49883"/>
        <label>2</label>
    </ligand>
</feature>
<feature type="binding site" evidence="1">
    <location>
        <position position="127"/>
    </location>
    <ligand>
        <name>[4Fe-4S] cluster</name>
        <dbReference type="ChEBI" id="CHEBI:49883"/>
        <label>2</label>
    </ligand>
</feature>
<feature type="binding site" evidence="1">
    <location>
        <position position="131"/>
    </location>
    <ligand>
        <name>[4Fe-4S] cluster</name>
        <dbReference type="ChEBI" id="CHEBI:49883"/>
        <label>1</label>
    </ligand>
</feature>
<proteinExistence type="inferred from homology"/>
<comment type="function">
    <text evidence="1">NDH-1 shuttles electrons from NADH, via FMN and iron-sulfur (Fe-S) centers, to quinones in the respiratory chain. The immediate electron acceptor for the enzyme in this species is believed to be ubiquinone. Couples the redox reaction to proton translocation (for every two electrons transferred, four hydrogen ions are translocated across the cytoplasmic membrane), and thus conserves the redox energy in a proton gradient.</text>
</comment>
<comment type="catalytic activity">
    <reaction evidence="1">
        <text>a quinone + NADH + 5 H(+)(in) = a quinol + NAD(+) + 4 H(+)(out)</text>
        <dbReference type="Rhea" id="RHEA:57888"/>
        <dbReference type="ChEBI" id="CHEBI:15378"/>
        <dbReference type="ChEBI" id="CHEBI:24646"/>
        <dbReference type="ChEBI" id="CHEBI:57540"/>
        <dbReference type="ChEBI" id="CHEBI:57945"/>
        <dbReference type="ChEBI" id="CHEBI:132124"/>
    </reaction>
</comment>
<comment type="cofactor">
    <cofactor evidence="1">
        <name>[4Fe-4S] cluster</name>
        <dbReference type="ChEBI" id="CHEBI:49883"/>
    </cofactor>
    <text evidence="1">Binds 2 [4Fe-4S] clusters per subunit.</text>
</comment>
<comment type="subunit">
    <text evidence="1">NDH-1 is composed of 14 different subunits. Subunits NuoA, H, J, K, L, M, N constitute the membrane sector of the complex.</text>
</comment>
<comment type="subcellular location">
    <subcellularLocation>
        <location evidence="1">Cell inner membrane</location>
        <topology evidence="1">Peripheral membrane protein</topology>
    </subcellularLocation>
</comment>
<comment type="similarity">
    <text evidence="1">Belongs to the complex I 23 kDa subunit family.</text>
</comment>
<reference key="1">
    <citation type="submission" date="2007-07" db="EMBL/GenBank/DDBJ databases">
        <title>Complete genome sequence of Campylobacter hominis ATCC BAA-381, a commensal isolated from the human gastrointestinal tract.</title>
        <authorList>
            <person name="Fouts D.E."/>
            <person name="Mongodin E.F."/>
            <person name="Puiu D."/>
            <person name="Sebastian Y."/>
            <person name="Miller W.G."/>
            <person name="Mandrell R.E."/>
            <person name="Nelson K.E."/>
        </authorList>
    </citation>
    <scope>NUCLEOTIDE SEQUENCE [LARGE SCALE GENOMIC DNA]</scope>
    <source>
        <strain>ATCC BAA-381 / DSM 21671 / CCUG 45161 / LMG 19568 / NCTC 13146 / CH001A</strain>
    </source>
</reference>
<accession>A7HZV6</accession>
<name>NUOI_CAMHC</name>
<keyword id="KW-0004">4Fe-4S</keyword>
<keyword id="KW-0997">Cell inner membrane</keyword>
<keyword id="KW-1003">Cell membrane</keyword>
<keyword id="KW-0408">Iron</keyword>
<keyword id="KW-0411">Iron-sulfur</keyword>
<keyword id="KW-0472">Membrane</keyword>
<keyword id="KW-0479">Metal-binding</keyword>
<keyword id="KW-0520">NAD</keyword>
<keyword id="KW-0874">Quinone</keyword>
<keyword id="KW-1185">Reference proteome</keyword>
<keyword id="KW-0677">Repeat</keyword>
<keyword id="KW-1278">Translocase</keyword>
<keyword id="KW-0830">Ubiquinone</keyword>
<protein>
    <recommendedName>
        <fullName evidence="1">NADH-quinone oxidoreductase subunit I</fullName>
        <ecNumber evidence="1">7.1.1.-</ecNumber>
    </recommendedName>
    <alternativeName>
        <fullName evidence="1">NADH dehydrogenase I subunit I</fullName>
    </alternativeName>
    <alternativeName>
        <fullName evidence="1">NDH-1 subunit I</fullName>
    </alternativeName>
</protein>
<gene>
    <name evidence="1" type="primary">nuoI</name>
    <name type="ordered locus">CHAB381_0189</name>
</gene>
<sequence>MVKYIKLDERAEVKSSFDRFKQFLHRTFRGELFIGLWVVLREMLKKNNSHTILYPMEKFELSDRYRGIHKLLRLLESGNERCIGCGLCEKICVSNCIRMETTLGDDGRKKVLNYSINFGRCVYCGLCADVCPELAIVHGGDYEFASEQRAFFGFKKDLLTKYDELKNQKEFTGFGSLPENVDDLIKLTPTVYTKKVDENV</sequence>
<evidence type="ECO:0000255" key="1">
    <source>
        <dbReference type="HAMAP-Rule" id="MF_01351"/>
    </source>
</evidence>
<dbReference type="EC" id="7.1.1.-" evidence="1"/>
<dbReference type="EMBL" id="CP000776">
    <property type="protein sequence ID" value="ABS52259.1"/>
    <property type="molecule type" value="Genomic_DNA"/>
</dbReference>
<dbReference type="RefSeq" id="WP_012108078.1">
    <property type="nucleotide sequence ID" value="NC_009714.1"/>
</dbReference>
<dbReference type="SMR" id="A7HZV6"/>
<dbReference type="STRING" id="360107.CHAB381_0189"/>
<dbReference type="KEGG" id="cha:CHAB381_0189"/>
<dbReference type="eggNOG" id="COG1143">
    <property type="taxonomic scope" value="Bacteria"/>
</dbReference>
<dbReference type="HOGENOM" id="CLU_067218_4_1_7"/>
<dbReference type="OrthoDB" id="9808559at2"/>
<dbReference type="Proteomes" id="UP000002407">
    <property type="component" value="Chromosome"/>
</dbReference>
<dbReference type="GO" id="GO:0005886">
    <property type="term" value="C:plasma membrane"/>
    <property type="evidence" value="ECO:0007669"/>
    <property type="project" value="UniProtKB-SubCell"/>
</dbReference>
<dbReference type="GO" id="GO:0051539">
    <property type="term" value="F:4 iron, 4 sulfur cluster binding"/>
    <property type="evidence" value="ECO:0007669"/>
    <property type="project" value="UniProtKB-KW"/>
</dbReference>
<dbReference type="GO" id="GO:0005506">
    <property type="term" value="F:iron ion binding"/>
    <property type="evidence" value="ECO:0007669"/>
    <property type="project" value="UniProtKB-UniRule"/>
</dbReference>
<dbReference type="GO" id="GO:0050136">
    <property type="term" value="F:NADH:ubiquinone reductase (non-electrogenic) activity"/>
    <property type="evidence" value="ECO:0007669"/>
    <property type="project" value="UniProtKB-UniRule"/>
</dbReference>
<dbReference type="GO" id="GO:0048038">
    <property type="term" value="F:quinone binding"/>
    <property type="evidence" value="ECO:0007669"/>
    <property type="project" value="UniProtKB-KW"/>
</dbReference>
<dbReference type="GO" id="GO:0009060">
    <property type="term" value="P:aerobic respiration"/>
    <property type="evidence" value="ECO:0007669"/>
    <property type="project" value="TreeGrafter"/>
</dbReference>
<dbReference type="Gene3D" id="3.30.70.3270">
    <property type="match status" value="1"/>
</dbReference>
<dbReference type="HAMAP" id="MF_01351">
    <property type="entry name" value="NDH1_NuoI"/>
    <property type="match status" value="1"/>
</dbReference>
<dbReference type="InterPro" id="IPR017896">
    <property type="entry name" value="4Fe4S_Fe-S-bd"/>
</dbReference>
<dbReference type="InterPro" id="IPR017900">
    <property type="entry name" value="4Fe4S_Fe_S_CS"/>
</dbReference>
<dbReference type="InterPro" id="IPR010226">
    <property type="entry name" value="NADH_quinone_OxRdtase_chainI"/>
</dbReference>
<dbReference type="NCBIfam" id="TIGR01971">
    <property type="entry name" value="NuoI"/>
    <property type="match status" value="1"/>
</dbReference>
<dbReference type="NCBIfam" id="NF004542">
    <property type="entry name" value="PRK05888.2-3"/>
    <property type="match status" value="1"/>
</dbReference>
<dbReference type="PANTHER" id="PTHR10849:SF20">
    <property type="entry name" value="NADH DEHYDROGENASE [UBIQUINONE] IRON-SULFUR PROTEIN 8, MITOCHONDRIAL"/>
    <property type="match status" value="1"/>
</dbReference>
<dbReference type="PANTHER" id="PTHR10849">
    <property type="entry name" value="NADH DEHYDROGENASE UBIQUINONE IRON-SULFUR PROTEIN 8, MITOCHONDRIAL"/>
    <property type="match status" value="1"/>
</dbReference>
<dbReference type="Pfam" id="PF12838">
    <property type="entry name" value="Fer4_7"/>
    <property type="match status" value="1"/>
</dbReference>
<dbReference type="SUPFAM" id="SSF54862">
    <property type="entry name" value="4Fe-4S ferredoxins"/>
    <property type="match status" value="1"/>
</dbReference>
<dbReference type="PROSITE" id="PS00198">
    <property type="entry name" value="4FE4S_FER_1"/>
    <property type="match status" value="1"/>
</dbReference>
<dbReference type="PROSITE" id="PS51379">
    <property type="entry name" value="4FE4S_FER_2"/>
    <property type="match status" value="2"/>
</dbReference>